<gene>
    <name evidence="1" type="primary">rplR</name>
    <name type="ordered locus">Bcer98_0120</name>
</gene>
<dbReference type="EMBL" id="CP000764">
    <property type="protein sequence ID" value="ABS20494.1"/>
    <property type="molecule type" value="Genomic_DNA"/>
</dbReference>
<dbReference type="RefSeq" id="WP_011983259.1">
    <property type="nucleotide sequence ID" value="NC_009674.1"/>
</dbReference>
<dbReference type="SMR" id="A7GK36"/>
<dbReference type="STRING" id="315749.Bcer98_0120"/>
<dbReference type="GeneID" id="33895441"/>
<dbReference type="KEGG" id="bcy:Bcer98_0120"/>
<dbReference type="eggNOG" id="COG0256">
    <property type="taxonomic scope" value="Bacteria"/>
</dbReference>
<dbReference type="HOGENOM" id="CLU_098841_0_1_9"/>
<dbReference type="OrthoDB" id="9810939at2"/>
<dbReference type="Proteomes" id="UP000002300">
    <property type="component" value="Chromosome"/>
</dbReference>
<dbReference type="GO" id="GO:0022625">
    <property type="term" value="C:cytosolic large ribosomal subunit"/>
    <property type="evidence" value="ECO:0007669"/>
    <property type="project" value="TreeGrafter"/>
</dbReference>
<dbReference type="GO" id="GO:0008097">
    <property type="term" value="F:5S rRNA binding"/>
    <property type="evidence" value="ECO:0007669"/>
    <property type="project" value="TreeGrafter"/>
</dbReference>
<dbReference type="GO" id="GO:0003735">
    <property type="term" value="F:structural constituent of ribosome"/>
    <property type="evidence" value="ECO:0007669"/>
    <property type="project" value="InterPro"/>
</dbReference>
<dbReference type="GO" id="GO:0006412">
    <property type="term" value="P:translation"/>
    <property type="evidence" value="ECO:0007669"/>
    <property type="project" value="UniProtKB-UniRule"/>
</dbReference>
<dbReference type="CDD" id="cd00432">
    <property type="entry name" value="Ribosomal_L18_L5e"/>
    <property type="match status" value="1"/>
</dbReference>
<dbReference type="FunFam" id="3.30.420.100:FF:000001">
    <property type="entry name" value="50S ribosomal protein L18"/>
    <property type="match status" value="1"/>
</dbReference>
<dbReference type="Gene3D" id="3.30.420.100">
    <property type="match status" value="1"/>
</dbReference>
<dbReference type="HAMAP" id="MF_01337_B">
    <property type="entry name" value="Ribosomal_uL18_B"/>
    <property type="match status" value="1"/>
</dbReference>
<dbReference type="InterPro" id="IPR004389">
    <property type="entry name" value="Ribosomal_uL18_bac-type"/>
</dbReference>
<dbReference type="InterPro" id="IPR005484">
    <property type="entry name" value="Ribosomal_uL18_bac/euk"/>
</dbReference>
<dbReference type="NCBIfam" id="TIGR00060">
    <property type="entry name" value="L18_bact"/>
    <property type="match status" value="1"/>
</dbReference>
<dbReference type="PANTHER" id="PTHR12899">
    <property type="entry name" value="39S RIBOSOMAL PROTEIN L18, MITOCHONDRIAL"/>
    <property type="match status" value="1"/>
</dbReference>
<dbReference type="PANTHER" id="PTHR12899:SF3">
    <property type="entry name" value="LARGE RIBOSOMAL SUBUNIT PROTEIN UL18M"/>
    <property type="match status" value="1"/>
</dbReference>
<dbReference type="Pfam" id="PF00861">
    <property type="entry name" value="Ribosomal_L18p"/>
    <property type="match status" value="1"/>
</dbReference>
<dbReference type="SUPFAM" id="SSF53137">
    <property type="entry name" value="Translational machinery components"/>
    <property type="match status" value="1"/>
</dbReference>
<accession>A7GK36</accession>
<keyword id="KW-0687">Ribonucleoprotein</keyword>
<keyword id="KW-0689">Ribosomal protein</keyword>
<keyword id="KW-0694">RNA-binding</keyword>
<keyword id="KW-0699">rRNA-binding</keyword>
<feature type="chain" id="PRO_1000086650" description="Large ribosomal subunit protein uL18">
    <location>
        <begin position="1"/>
        <end position="120"/>
    </location>
</feature>
<protein>
    <recommendedName>
        <fullName evidence="1">Large ribosomal subunit protein uL18</fullName>
    </recommendedName>
    <alternativeName>
        <fullName evidence="2">50S ribosomal protein L18</fullName>
    </alternativeName>
</protein>
<proteinExistence type="inferred from homology"/>
<evidence type="ECO:0000255" key="1">
    <source>
        <dbReference type="HAMAP-Rule" id="MF_01337"/>
    </source>
</evidence>
<evidence type="ECO:0000305" key="2"/>
<comment type="function">
    <text evidence="1">This is one of the proteins that bind and probably mediate the attachment of the 5S RNA into the large ribosomal subunit, where it forms part of the central protuberance.</text>
</comment>
<comment type="subunit">
    <text evidence="1">Part of the 50S ribosomal subunit; part of the 5S rRNA/L5/L18/L25 subcomplex. Contacts the 5S and 23S rRNAs.</text>
</comment>
<comment type="similarity">
    <text evidence="1">Belongs to the universal ribosomal protein uL18 family.</text>
</comment>
<organism>
    <name type="scientific">Bacillus cytotoxicus (strain DSM 22905 / CIP 110041 / 391-98 / NVH 391-98)</name>
    <dbReference type="NCBI Taxonomy" id="315749"/>
    <lineage>
        <taxon>Bacteria</taxon>
        <taxon>Bacillati</taxon>
        <taxon>Bacillota</taxon>
        <taxon>Bacilli</taxon>
        <taxon>Bacillales</taxon>
        <taxon>Bacillaceae</taxon>
        <taxon>Bacillus</taxon>
        <taxon>Bacillus cereus group</taxon>
    </lineage>
</organism>
<sequence length="120" mass="13116">MITKADKNATRKKRHARVRAKLTGTAERPRLNVFRSNQHIYAQVIDDVKGVTLVSASTLDKDLALNGTGNIEAATKVGELVAKRAVEKGVKEVVFDRGGYLYHGRVKALAEAAREAGLQF</sequence>
<reference key="1">
    <citation type="journal article" date="2008" name="Chem. Biol. Interact.">
        <title>Extending the Bacillus cereus group genomics to putative food-borne pathogens of different toxicity.</title>
        <authorList>
            <person name="Lapidus A."/>
            <person name="Goltsman E."/>
            <person name="Auger S."/>
            <person name="Galleron N."/>
            <person name="Segurens B."/>
            <person name="Dossat C."/>
            <person name="Land M.L."/>
            <person name="Broussolle V."/>
            <person name="Brillard J."/>
            <person name="Guinebretiere M.-H."/>
            <person name="Sanchis V."/>
            <person name="Nguen-the C."/>
            <person name="Lereclus D."/>
            <person name="Richardson P."/>
            <person name="Wincker P."/>
            <person name="Weissenbach J."/>
            <person name="Ehrlich S.D."/>
            <person name="Sorokin A."/>
        </authorList>
    </citation>
    <scope>NUCLEOTIDE SEQUENCE [LARGE SCALE GENOMIC DNA]</scope>
    <source>
        <strain>DSM 22905 / CIP 110041 / 391-98 / NVH 391-98</strain>
    </source>
</reference>
<name>RL18_BACCN</name>